<feature type="chain" id="PRO_0000186621" description="PTS system mannitol-specific EIICB component">
    <location>
        <begin position="1"/>
        <end position="512"/>
    </location>
</feature>
<feature type="topological domain" description="Cytoplasmic" evidence="1">
    <location>
        <begin position="1"/>
        <end position="28"/>
    </location>
</feature>
<feature type="transmembrane region" description="Helical" evidence="1">
    <location>
        <begin position="29"/>
        <end position="50"/>
    </location>
</feature>
<feature type="topological domain" description="Extracellular" evidence="1">
    <location>
        <begin position="51"/>
        <end position="54"/>
    </location>
</feature>
<feature type="transmembrane region" description="Helical" evidence="1">
    <location>
        <begin position="55"/>
        <end position="75"/>
    </location>
</feature>
<feature type="topological domain" description="Cytoplasmic" evidence="1">
    <location>
        <begin position="76"/>
        <end position="139"/>
    </location>
</feature>
<feature type="transmembrane region" description="Helical" evidence="1">
    <location>
        <begin position="140"/>
        <end position="161"/>
    </location>
</feature>
<feature type="topological domain" description="Extracellular" evidence="1">
    <location>
        <begin position="162"/>
        <end position="170"/>
    </location>
</feature>
<feature type="transmembrane region" description="Helical" evidence="1">
    <location>
        <begin position="171"/>
        <end position="191"/>
    </location>
</feature>
<feature type="topological domain" description="Cytoplasmic" evidence="1">
    <location>
        <begin position="192"/>
        <end position="278"/>
    </location>
</feature>
<feature type="transmembrane region" description="Helical" evidence="1">
    <location>
        <begin position="279"/>
        <end position="298"/>
    </location>
</feature>
<feature type="topological domain" description="Extracellular" evidence="1">
    <location>
        <begin position="299"/>
        <end position="318"/>
    </location>
</feature>
<feature type="transmembrane region" description="Helical" evidence="1">
    <location>
        <begin position="319"/>
        <end position="340"/>
    </location>
</feature>
<feature type="topological domain" description="Cytoplasmic" evidence="1">
    <location>
        <begin position="341"/>
        <end position="512"/>
    </location>
</feature>
<feature type="domain" description="PTS EIIC type-2" evidence="4">
    <location>
        <begin position="17"/>
        <end position="349"/>
    </location>
</feature>
<feature type="domain" description="PTS EIIB type-2" evidence="3">
    <location>
        <begin position="419"/>
        <end position="512"/>
    </location>
</feature>
<feature type="region of interest" description="Disordered" evidence="5">
    <location>
        <begin position="355"/>
        <end position="402"/>
    </location>
</feature>
<feature type="compositionally biased region" description="Low complexity" evidence="5">
    <location>
        <begin position="365"/>
        <end position="376"/>
    </location>
</feature>
<feature type="compositionally biased region" description="Polar residues" evidence="5">
    <location>
        <begin position="380"/>
        <end position="392"/>
    </location>
</feature>
<feature type="active site" description="Phosphocysteine intermediate; for EIIB activity" evidence="1 2">
    <location>
        <position position="425"/>
    </location>
</feature>
<feature type="modified residue" description="Phosphocysteine; by EIIA" evidence="1 2 3">
    <location>
        <position position="425"/>
    </location>
</feature>
<reference key="1">
    <citation type="journal article" date="2001" name="Lancet">
        <title>Whole genome sequencing of meticillin-resistant Staphylococcus aureus.</title>
        <authorList>
            <person name="Kuroda M."/>
            <person name="Ohta T."/>
            <person name="Uchiyama I."/>
            <person name="Baba T."/>
            <person name="Yuzawa H."/>
            <person name="Kobayashi I."/>
            <person name="Cui L."/>
            <person name="Oguchi A."/>
            <person name="Aoki K."/>
            <person name="Nagai Y."/>
            <person name="Lian J.-Q."/>
            <person name="Ito T."/>
            <person name="Kanamori M."/>
            <person name="Matsumaru H."/>
            <person name="Maruyama A."/>
            <person name="Murakami H."/>
            <person name="Hosoyama A."/>
            <person name="Mizutani-Ui Y."/>
            <person name="Takahashi N.K."/>
            <person name="Sawano T."/>
            <person name="Inoue R."/>
            <person name="Kaito C."/>
            <person name="Sekimizu K."/>
            <person name="Hirakawa H."/>
            <person name="Kuhara S."/>
            <person name="Goto S."/>
            <person name="Yabuzaki J."/>
            <person name="Kanehisa M."/>
            <person name="Yamashita A."/>
            <person name="Oshima K."/>
            <person name="Furuya K."/>
            <person name="Yoshino C."/>
            <person name="Shiba T."/>
            <person name="Hattori M."/>
            <person name="Ogasawara N."/>
            <person name="Hayashi H."/>
            <person name="Hiramatsu K."/>
        </authorList>
    </citation>
    <scope>NUCLEOTIDE SEQUENCE [LARGE SCALE GENOMIC DNA]</scope>
    <source>
        <strain>Mu50 / ATCC 700699</strain>
    </source>
</reference>
<name>PTMCB_STAAM</name>
<keyword id="KW-1003">Cell membrane</keyword>
<keyword id="KW-0418">Kinase</keyword>
<keyword id="KW-0472">Membrane</keyword>
<keyword id="KW-0597">Phosphoprotein</keyword>
<keyword id="KW-0598">Phosphotransferase system</keyword>
<keyword id="KW-0762">Sugar transport</keyword>
<keyword id="KW-0808">Transferase</keyword>
<keyword id="KW-0812">Transmembrane</keyword>
<keyword id="KW-1133">Transmembrane helix</keyword>
<keyword id="KW-0813">Transport</keyword>
<dbReference type="EC" id="2.7.1.197" evidence="1 2"/>
<dbReference type="EMBL" id="BA000017">
    <property type="protein sequence ID" value="BAB58318.1"/>
    <property type="molecule type" value="Genomic_DNA"/>
</dbReference>
<dbReference type="RefSeq" id="WP_000083807.1">
    <property type="nucleotide sequence ID" value="NC_002758.2"/>
</dbReference>
<dbReference type="SMR" id="Q99SA3"/>
<dbReference type="KEGG" id="sav:SAV2156"/>
<dbReference type="HOGENOM" id="CLU_028721_2_1_9"/>
<dbReference type="PhylomeDB" id="Q99SA3"/>
<dbReference type="Proteomes" id="UP000002481">
    <property type="component" value="Chromosome"/>
</dbReference>
<dbReference type="GO" id="GO:0005886">
    <property type="term" value="C:plasma membrane"/>
    <property type="evidence" value="ECO:0007669"/>
    <property type="project" value="UniProtKB-SubCell"/>
</dbReference>
<dbReference type="GO" id="GO:0016301">
    <property type="term" value="F:kinase activity"/>
    <property type="evidence" value="ECO:0007669"/>
    <property type="project" value="UniProtKB-KW"/>
</dbReference>
<dbReference type="GO" id="GO:0022872">
    <property type="term" value="F:protein-N(PI)-phosphohistidine-mannitol phosphotransferase system transmembrane transporter activity"/>
    <property type="evidence" value="ECO:0007669"/>
    <property type="project" value="InterPro"/>
</dbReference>
<dbReference type="GO" id="GO:0090563">
    <property type="term" value="F:protein-phosphocysteine-sugar phosphotransferase activity"/>
    <property type="evidence" value="ECO:0007669"/>
    <property type="project" value="TreeGrafter"/>
</dbReference>
<dbReference type="GO" id="GO:0009401">
    <property type="term" value="P:phosphoenolpyruvate-dependent sugar phosphotransferase system"/>
    <property type="evidence" value="ECO:0007669"/>
    <property type="project" value="UniProtKB-KW"/>
</dbReference>
<dbReference type="CDD" id="cd05567">
    <property type="entry name" value="PTS_IIB_mannitol"/>
    <property type="match status" value="1"/>
</dbReference>
<dbReference type="FunFam" id="3.40.50.2300:FF:000047">
    <property type="entry name" value="PTS system mannitol-specific transporter subunit IICBA"/>
    <property type="match status" value="1"/>
</dbReference>
<dbReference type="Gene3D" id="3.40.50.2300">
    <property type="match status" value="1"/>
</dbReference>
<dbReference type="InterPro" id="IPR036095">
    <property type="entry name" value="PTS_EIIB-like_sf"/>
</dbReference>
<dbReference type="InterPro" id="IPR013011">
    <property type="entry name" value="PTS_EIIB_2"/>
</dbReference>
<dbReference type="InterPro" id="IPR003501">
    <property type="entry name" value="PTS_EIIB_2/3"/>
</dbReference>
<dbReference type="InterPro" id="IPR029503">
    <property type="entry name" value="PTS_EIIB_mannitol"/>
</dbReference>
<dbReference type="InterPro" id="IPR003352">
    <property type="entry name" value="PTS_EIIC"/>
</dbReference>
<dbReference type="InterPro" id="IPR013014">
    <property type="entry name" value="PTS_EIIC_2"/>
</dbReference>
<dbReference type="InterPro" id="IPR004718">
    <property type="entry name" value="PTS_IIC_mtl"/>
</dbReference>
<dbReference type="InterPro" id="IPR050893">
    <property type="entry name" value="Sugar_PTS"/>
</dbReference>
<dbReference type="NCBIfam" id="TIGR00851">
    <property type="entry name" value="mtlA"/>
    <property type="match status" value="1"/>
</dbReference>
<dbReference type="PANTHER" id="PTHR30181">
    <property type="entry name" value="MANNITOL PERMEASE IIC COMPONENT"/>
    <property type="match status" value="1"/>
</dbReference>
<dbReference type="PANTHER" id="PTHR30181:SF2">
    <property type="entry name" value="PTS SYSTEM MANNITOL-SPECIFIC EIICBA COMPONENT"/>
    <property type="match status" value="1"/>
</dbReference>
<dbReference type="Pfam" id="PF02378">
    <property type="entry name" value="PTS_EIIC"/>
    <property type="match status" value="1"/>
</dbReference>
<dbReference type="Pfam" id="PF02302">
    <property type="entry name" value="PTS_IIB"/>
    <property type="match status" value="1"/>
</dbReference>
<dbReference type="SUPFAM" id="SSF52794">
    <property type="entry name" value="PTS system IIB component-like"/>
    <property type="match status" value="1"/>
</dbReference>
<dbReference type="PROSITE" id="PS51099">
    <property type="entry name" value="PTS_EIIB_TYPE_2"/>
    <property type="match status" value="1"/>
</dbReference>
<dbReference type="PROSITE" id="PS51104">
    <property type="entry name" value="PTS_EIIC_TYPE_2"/>
    <property type="match status" value="1"/>
</dbReference>
<evidence type="ECO:0000250" key="1">
    <source>
        <dbReference type="UniProtKB" id="P00550"/>
    </source>
</evidence>
<evidence type="ECO:0000250" key="2">
    <source>
        <dbReference type="UniProtKB" id="P28008"/>
    </source>
</evidence>
<evidence type="ECO:0000255" key="3">
    <source>
        <dbReference type="PROSITE-ProRule" id="PRU00422"/>
    </source>
</evidence>
<evidence type="ECO:0000255" key="4">
    <source>
        <dbReference type="PROSITE-ProRule" id="PRU00427"/>
    </source>
</evidence>
<evidence type="ECO:0000256" key="5">
    <source>
        <dbReference type="SAM" id="MobiDB-lite"/>
    </source>
</evidence>
<comment type="function">
    <text evidence="2">The phosphoenolpyruvate-dependent sugar phosphotransferase system (sugar PTS), a major carbohydrate active transport system, catalyzes the phosphorylation of incoming sugar substrates concomitantly with their translocation across the cell membrane. The enzyme II CmtAB PTS system is involved in D-mannitol transport.</text>
</comment>
<comment type="catalytic activity">
    <reaction evidence="1 2">
        <text>D-mannitol(out) + N(pros)-phospho-L-histidyl-[protein] = D-mannitol 1-phosphate(in) + L-histidyl-[protein]</text>
        <dbReference type="Rhea" id="RHEA:33363"/>
        <dbReference type="Rhea" id="RHEA-COMP:9745"/>
        <dbReference type="Rhea" id="RHEA-COMP:9746"/>
        <dbReference type="ChEBI" id="CHEBI:16899"/>
        <dbReference type="ChEBI" id="CHEBI:29979"/>
        <dbReference type="ChEBI" id="CHEBI:61381"/>
        <dbReference type="ChEBI" id="CHEBI:64837"/>
        <dbReference type="EC" id="2.7.1.197"/>
    </reaction>
</comment>
<comment type="subunit">
    <text evidence="2">Homodimer.</text>
</comment>
<comment type="subcellular location">
    <subcellularLocation>
        <location evidence="4">Cell membrane</location>
        <topology evidence="4">Multi-pass membrane protein</topology>
    </subcellularLocation>
</comment>
<comment type="domain">
    <text evidence="4">The EIIC type-2 domain forms the PTS system translocation channel and contains the specific substrate-binding site.</text>
</comment>
<comment type="domain">
    <text evidence="3">The PTS EIIB type-2 domain is phosphorylated by phospho-EIIA on a cysteinyl residue. Then, it transfers the phosphoryl group to the sugar substrate concomitantly with the sugar uptake processed by the PTS EIIC type-2 domain.</text>
</comment>
<accession>Q99SA3</accession>
<proteinExistence type="inferred from homology"/>
<organism>
    <name type="scientific">Staphylococcus aureus (strain Mu50 / ATCC 700699)</name>
    <dbReference type="NCBI Taxonomy" id="158878"/>
    <lineage>
        <taxon>Bacteria</taxon>
        <taxon>Bacillati</taxon>
        <taxon>Bacillota</taxon>
        <taxon>Bacilli</taxon>
        <taxon>Bacillales</taxon>
        <taxon>Staphylococcaceae</taxon>
        <taxon>Staphylococcus</taxon>
    </lineage>
</organism>
<sequence length="512" mass="55065">MSQTEEKKGIGRRVQAFGSFLSSMIMPNIGAFIAWGFIAAIFIDNGWLPNKDLATLAGPMITYLIPLLIAFSGGRLIYDLRGGIIAATATMGVIVALPDTPMLLGAMIMGPLVGWLMKKTDQLIQPRTPQGFEMLFNNFSAGILGFIMTIAGFKILAPLMKFIMHILSVAVEALVHAHLLPLVSILVEPAKIVFLNNAINHGVFTPLGADQAAKAGQSILYTIESNPGPGLGILLAYMIFGKGTAKATSYGAGIIHFLGGIHEIYFPYVLMRPLLFIAVILGGMTGVATYQATGFGFKSPASPGSFIVYCLNAPRGEFLHMLLGVFLAALVSFVVAALIMKFTREPKQDLEAATAQMENTKGKKSSVASKLVSSDKNVNTEENASGNVSETSSSDDDPEALLDNYNTEDVDAHNYNNINHVIFACDAGMGSSAMGASMLRNKFKKAGINDITVTNTAINQLPKDAQLVITQKKLTDRAIKQTPNAIHISVDNFLNSPRYEELLNNLKKDDQA</sequence>
<gene>
    <name type="primary">mtlA</name>
    <name type="ordered locus">SAV2156</name>
</gene>
<protein>
    <recommendedName>
        <fullName evidence="2">PTS system mannitol-specific EIICB component</fullName>
    </recommendedName>
    <alternativeName>
        <fullName evidence="2">EIICB-Mtl</fullName>
        <shortName evidence="2">EII-Mtl</shortName>
    </alternativeName>
    <domain>
        <recommendedName>
            <fullName evidence="2">Mannitol permease IIC component</fullName>
        </recommendedName>
        <alternativeName>
            <fullName evidence="2">PTS system mannitol-specific EIIC component</fullName>
        </alternativeName>
    </domain>
    <domain>
        <recommendedName>
            <fullName evidence="2">Mannitol-specific phosphotransferase enzyme IIB component</fullName>
            <ecNumber evidence="1 2">2.7.1.197</ecNumber>
        </recommendedName>
        <alternativeName>
            <fullName evidence="2">PTS system mannitol-specific EIIB component</fullName>
        </alternativeName>
    </domain>
</protein>